<reference key="1">
    <citation type="submission" date="2007-10" db="EMBL/GenBank/DDBJ databases">
        <title>Complete sequence of Salinispora arenicola CNS-205.</title>
        <authorList>
            <consortium name="US DOE Joint Genome Institute"/>
            <person name="Copeland A."/>
            <person name="Lucas S."/>
            <person name="Lapidus A."/>
            <person name="Barry K."/>
            <person name="Glavina del Rio T."/>
            <person name="Dalin E."/>
            <person name="Tice H."/>
            <person name="Pitluck S."/>
            <person name="Foster B."/>
            <person name="Schmutz J."/>
            <person name="Larimer F."/>
            <person name="Land M."/>
            <person name="Hauser L."/>
            <person name="Kyrpides N."/>
            <person name="Ivanova N."/>
            <person name="Jensen P.R."/>
            <person name="Moore B.S."/>
            <person name="Penn K."/>
            <person name="Jenkins C."/>
            <person name="Udwary D."/>
            <person name="Xiang L."/>
            <person name="Gontang E."/>
            <person name="Richardson P."/>
        </authorList>
    </citation>
    <scope>NUCLEOTIDE SEQUENCE [LARGE SCALE GENOMIC DNA]</scope>
    <source>
        <strain>CNS-205</strain>
    </source>
</reference>
<evidence type="ECO:0000255" key="1">
    <source>
        <dbReference type="HAMAP-Rule" id="MF_00013"/>
    </source>
</evidence>
<evidence type="ECO:0000255" key="2">
    <source>
        <dbReference type="PROSITE-ProRule" id="PRU01067"/>
    </source>
</evidence>
<name>LIPB_SALAI</name>
<organism>
    <name type="scientific">Salinispora arenicola (strain CNS-205)</name>
    <dbReference type="NCBI Taxonomy" id="391037"/>
    <lineage>
        <taxon>Bacteria</taxon>
        <taxon>Bacillati</taxon>
        <taxon>Actinomycetota</taxon>
        <taxon>Actinomycetes</taxon>
        <taxon>Micromonosporales</taxon>
        <taxon>Micromonosporaceae</taxon>
        <taxon>Salinispora</taxon>
    </lineage>
</organism>
<feature type="chain" id="PRO_1000074012" description="Octanoyltransferase">
    <location>
        <begin position="1"/>
        <end position="213"/>
    </location>
</feature>
<feature type="domain" description="BPL/LPL catalytic" evidence="2">
    <location>
        <begin position="35"/>
        <end position="213"/>
    </location>
</feature>
<feature type="active site" description="Acyl-thioester intermediate" evidence="1">
    <location>
        <position position="176"/>
    </location>
</feature>
<feature type="binding site" evidence="1">
    <location>
        <begin position="73"/>
        <end position="80"/>
    </location>
    <ligand>
        <name>substrate</name>
    </ligand>
</feature>
<feature type="binding site" evidence="1">
    <location>
        <begin position="145"/>
        <end position="147"/>
    </location>
    <ligand>
        <name>substrate</name>
    </ligand>
</feature>
<feature type="binding site" evidence="1">
    <location>
        <begin position="158"/>
        <end position="160"/>
    </location>
    <ligand>
        <name>substrate</name>
    </ligand>
</feature>
<feature type="site" description="Lowers pKa of active site Cys" evidence="1">
    <location>
        <position position="142"/>
    </location>
</feature>
<dbReference type="EC" id="2.3.1.181" evidence="1"/>
<dbReference type="EMBL" id="CP000850">
    <property type="protein sequence ID" value="ABV99362.1"/>
    <property type="molecule type" value="Genomic_DNA"/>
</dbReference>
<dbReference type="SMR" id="A8LYF4"/>
<dbReference type="STRING" id="391037.Sare_3560"/>
<dbReference type="KEGG" id="saq:Sare_3560"/>
<dbReference type="PATRIC" id="fig|391037.6.peg.3588"/>
<dbReference type="eggNOG" id="COG0321">
    <property type="taxonomic scope" value="Bacteria"/>
</dbReference>
<dbReference type="HOGENOM" id="CLU_035168_2_1_11"/>
<dbReference type="OrthoDB" id="9787061at2"/>
<dbReference type="UniPathway" id="UPA00538">
    <property type="reaction ID" value="UER00592"/>
</dbReference>
<dbReference type="GO" id="GO:0005737">
    <property type="term" value="C:cytoplasm"/>
    <property type="evidence" value="ECO:0007669"/>
    <property type="project" value="UniProtKB-SubCell"/>
</dbReference>
<dbReference type="GO" id="GO:0033819">
    <property type="term" value="F:lipoyl(octanoyl) transferase activity"/>
    <property type="evidence" value="ECO:0007669"/>
    <property type="project" value="UniProtKB-EC"/>
</dbReference>
<dbReference type="GO" id="GO:0036211">
    <property type="term" value="P:protein modification process"/>
    <property type="evidence" value="ECO:0007669"/>
    <property type="project" value="InterPro"/>
</dbReference>
<dbReference type="CDD" id="cd16444">
    <property type="entry name" value="LipB"/>
    <property type="match status" value="1"/>
</dbReference>
<dbReference type="FunFam" id="3.30.930.10:FF:000035">
    <property type="entry name" value="Putative lipoyltransferase 2, mitochondrial"/>
    <property type="match status" value="1"/>
</dbReference>
<dbReference type="Gene3D" id="3.30.930.10">
    <property type="entry name" value="Bira Bifunctional Protein, Domain 2"/>
    <property type="match status" value="1"/>
</dbReference>
<dbReference type="HAMAP" id="MF_00013">
    <property type="entry name" value="LipB"/>
    <property type="match status" value="1"/>
</dbReference>
<dbReference type="InterPro" id="IPR045864">
    <property type="entry name" value="aa-tRNA-synth_II/BPL/LPL"/>
</dbReference>
<dbReference type="InterPro" id="IPR004143">
    <property type="entry name" value="BPL_LPL_catalytic"/>
</dbReference>
<dbReference type="InterPro" id="IPR000544">
    <property type="entry name" value="Octanoyltransferase"/>
</dbReference>
<dbReference type="InterPro" id="IPR020605">
    <property type="entry name" value="Octanoyltransferase_CS"/>
</dbReference>
<dbReference type="NCBIfam" id="TIGR00214">
    <property type="entry name" value="lipB"/>
    <property type="match status" value="1"/>
</dbReference>
<dbReference type="NCBIfam" id="NF010925">
    <property type="entry name" value="PRK14345.1"/>
    <property type="match status" value="1"/>
</dbReference>
<dbReference type="PANTHER" id="PTHR10993:SF7">
    <property type="entry name" value="LIPOYLTRANSFERASE 2, MITOCHONDRIAL-RELATED"/>
    <property type="match status" value="1"/>
</dbReference>
<dbReference type="PANTHER" id="PTHR10993">
    <property type="entry name" value="OCTANOYLTRANSFERASE"/>
    <property type="match status" value="1"/>
</dbReference>
<dbReference type="Pfam" id="PF21948">
    <property type="entry name" value="LplA-B_cat"/>
    <property type="match status" value="1"/>
</dbReference>
<dbReference type="PIRSF" id="PIRSF016262">
    <property type="entry name" value="LPLase"/>
    <property type="match status" value="1"/>
</dbReference>
<dbReference type="SUPFAM" id="SSF55681">
    <property type="entry name" value="Class II aaRS and biotin synthetases"/>
    <property type="match status" value="1"/>
</dbReference>
<dbReference type="PROSITE" id="PS51733">
    <property type="entry name" value="BPL_LPL_CATALYTIC"/>
    <property type="match status" value="1"/>
</dbReference>
<dbReference type="PROSITE" id="PS01313">
    <property type="entry name" value="LIPB"/>
    <property type="match status" value="1"/>
</dbReference>
<keyword id="KW-0012">Acyltransferase</keyword>
<keyword id="KW-0963">Cytoplasm</keyword>
<keyword id="KW-0808">Transferase</keyword>
<protein>
    <recommendedName>
        <fullName evidence="1">Octanoyltransferase</fullName>
        <ecNumber evidence="1">2.3.1.181</ecNumber>
    </recommendedName>
    <alternativeName>
        <fullName evidence="1">Lipoate-protein ligase B</fullName>
    </alternativeName>
    <alternativeName>
        <fullName evidence="1">Lipoyl/octanoyl transferase</fullName>
    </alternativeName>
    <alternativeName>
        <fullName evidence="1">Octanoyl-[acyl-carrier-protein]-protein N-octanoyltransferase</fullName>
    </alternativeName>
</protein>
<gene>
    <name evidence="1" type="primary">lipB</name>
    <name type="ordered locus">Sare_3560</name>
</gene>
<sequence>MTTTTSDLTVLRAGTLDYEAAWEEQRRLHESVVTDKHGDAVLLLEHPSVYTAGKRTEPWDRPMDGTPVIDVDRGGKITWHGPGQLVGYPILRLPDPVDVVAYVRRVEQMLIDVCAEFGLVAGRIEGRSGVWVPADDRGPARKVAAIGIRVARGVTLHGFSLNCDCDLTYYDRIVPCGIRDAGVTSLAAELGRPVTVADALPVVERHLPTLVGA</sequence>
<comment type="function">
    <text evidence="1">Catalyzes the transfer of endogenously produced octanoic acid from octanoyl-acyl-carrier-protein onto the lipoyl domains of lipoate-dependent enzymes. Lipoyl-ACP can also act as a substrate although octanoyl-ACP is likely to be the physiological substrate.</text>
</comment>
<comment type="catalytic activity">
    <reaction evidence="1">
        <text>octanoyl-[ACP] + L-lysyl-[protein] = N(6)-octanoyl-L-lysyl-[protein] + holo-[ACP] + H(+)</text>
        <dbReference type="Rhea" id="RHEA:17665"/>
        <dbReference type="Rhea" id="RHEA-COMP:9636"/>
        <dbReference type="Rhea" id="RHEA-COMP:9685"/>
        <dbReference type="Rhea" id="RHEA-COMP:9752"/>
        <dbReference type="Rhea" id="RHEA-COMP:9928"/>
        <dbReference type="ChEBI" id="CHEBI:15378"/>
        <dbReference type="ChEBI" id="CHEBI:29969"/>
        <dbReference type="ChEBI" id="CHEBI:64479"/>
        <dbReference type="ChEBI" id="CHEBI:78463"/>
        <dbReference type="ChEBI" id="CHEBI:78809"/>
        <dbReference type="EC" id="2.3.1.181"/>
    </reaction>
</comment>
<comment type="pathway">
    <text evidence="1">Protein modification; protein lipoylation via endogenous pathway; protein N(6)-(lipoyl)lysine from octanoyl-[acyl-carrier-protein]: step 1/2.</text>
</comment>
<comment type="subcellular location">
    <subcellularLocation>
        <location evidence="1">Cytoplasm</location>
    </subcellularLocation>
</comment>
<comment type="miscellaneous">
    <text evidence="1">In the reaction, the free carboxyl group of octanoic acid is attached via an amide linkage to the epsilon-amino group of a specific lysine residue of lipoyl domains of lipoate-dependent enzymes.</text>
</comment>
<comment type="similarity">
    <text evidence="1">Belongs to the LipB family.</text>
</comment>
<proteinExistence type="inferred from homology"/>
<accession>A8LYF4</accession>